<keyword id="KW-0963">Cytoplasm</keyword>
<keyword id="KW-0255">Endonuclease</keyword>
<keyword id="KW-0378">Hydrolase</keyword>
<keyword id="KW-0479">Metal-binding</keyword>
<keyword id="KW-0540">Nuclease</keyword>
<keyword id="KW-1185">Reference proteome</keyword>
<sequence>MQHANTTALYLIGSDESGKGDSFGGIAVSAVLIHKDKINTLHQIGVGDSKQFNDYQIKALVPKIKAAVHDQVTLSVDAKTYNQLVQSFKNVNVMLTFLHCKVYHQLLQQNKLTAQQCDISIDEFANVKLFTQYTQKLTSLQNELKELVIPNHFLIRGESYSKVIAAASILARAAFIAQMEQLSHQYGVQFPKGSAHGIVEALHLLKTKRQFHKFAQYSAVCKTTFKNVASFLKQLA</sequence>
<evidence type="ECO:0000250" key="1">
    <source>
        <dbReference type="UniProtKB" id="Q8EPH7"/>
    </source>
</evidence>
<evidence type="ECO:0000255" key="2">
    <source>
        <dbReference type="PROSITE-ProRule" id="PRU01319"/>
    </source>
</evidence>
<evidence type="ECO:0000305" key="3"/>
<gene>
    <name type="primary">rnhC</name>
    <name type="ordered locus">MPN_118</name>
    <name type="ORF">C09_orf143b</name>
    <name type="ORF">MP036</name>
</gene>
<feature type="chain" id="PRO_0000210451" description="Ribonuclease HIII">
    <location>
        <begin position="1"/>
        <end position="236"/>
    </location>
</feature>
<feature type="domain" description="RNase H type-2" evidence="2">
    <location>
        <begin position="9"/>
        <end position="236"/>
    </location>
</feature>
<feature type="binding site" evidence="1">
    <location>
        <position position="15"/>
    </location>
    <ligand>
        <name>a divalent metal cation</name>
        <dbReference type="ChEBI" id="CHEBI:60240"/>
    </ligand>
</feature>
<feature type="binding site" evidence="1">
    <location>
        <position position="16"/>
    </location>
    <ligand>
        <name>a divalent metal cation</name>
        <dbReference type="ChEBI" id="CHEBI:60240"/>
    </ligand>
</feature>
<feature type="binding site" evidence="1">
    <location>
        <position position="122"/>
    </location>
    <ligand>
        <name>a divalent metal cation</name>
        <dbReference type="ChEBI" id="CHEBI:60240"/>
    </ligand>
</feature>
<protein>
    <recommendedName>
        <fullName>Ribonuclease HIII</fullName>
        <shortName>RNase HIII</shortName>
        <ecNumber evidence="1">3.1.26.4</ecNumber>
    </recommendedName>
</protein>
<name>RNH3_MYCPN</name>
<accession>P75446</accession>
<organism>
    <name type="scientific">Mycoplasma pneumoniae (strain ATCC 29342 / M129 / Subtype 1)</name>
    <name type="common">Mycoplasmoides pneumoniae</name>
    <dbReference type="NCBI Taxonomy" id="272634"/>
    <lineage>
        <taxon>Bacteria</taxon>
        <taxon>Bacillati</taxon>
        <taxon>Mycoplasmatota</taxon>
        <taxon>Mycoplasmoidales</taxon>
        <taxon>Mycoplasmoidaceae</taxon>
        <taxon>Mycoplasmoides</taxon>
    </lineage>
</organism>
<comment type="function">
    <text evidence="1">Endonuclease that specifically degrades the RNA of RNA-DNA hybrids.</text>
</comment>
<comment type="catalytic activity">
    <reaction evidence="1">
        <text>Endonucleolytic cleavage to 5'-phosphomonoester.</text>
        <dbReference type="EC" id="3.1.26.4"/>
    </reaction>
</comment>
<comment type="cofactor">
    <cofactor evidence="1">
        <name>a divalent metal cation</name>
        <dbReference type="ChEBI" id="CHEBI:60240"/>
    </cofactor>
    <text evidence="1">Manganese or magnesium. Binds 1 divalent metal ion per monomer in the absence of substrate. May bind a second metal ion after substrate binding.</text>
</comment>
<comment type="subcellular location">
    <subcellularLocation>
        <location evidence="1">Cytoplasm</location>
    </subcellularLocation>
</comment>
<comment type="similarity">
    <text evidence="3">Belongs to the RNase HII family. RnhC subfamily.</text>
</comment>
<proteinExistence type="inferred from homology"/>
<reference key="1">
    <citation type="journal article" date="1996" name="Nucleic Acids Res.">
        <title>Complete sequence analysis of the genome of the bacterium Mycoplasma pneumoniae.</title>
        <authorList>
            <person name="Himmelreich R."/>
            <person name="Hilbert H."/>
            <person name="Plagens H."/>
            <person name="Pirkl E."/>
            <person name="Li B.-C."/>
            <person name="Herrmann R."/>
        </authorList>
    </citation>
    <scope>NUCLEOTIDE SEQUENCE [LARGE SCALE GENOMIC DNA]</scope>
    <source>
        <strain>ATCC 29342 / M129 / Subtype 1</strain>
    </source>
</reference>
<reference key="2">
    <citation type="journal article" date="2000" name="Nucleic Acids Res.">
        <title>Re-annotating the Mycoplasma pneumoniae genome sequence: adding value, function and reading frames.</title>
        <authorList>
            <person name="Dandekar T."/>
            <person name="Huynen M."/>
            <person name="Regula J.T."/>
            <person name="Ueberle B."/>
            <person name="Zimmermann C.U."/>
            <person name="Andrade M.A."/>
            <person name="Doerks T."/>
            <person name="Sanchez-Pulido L."/>
            <person name="Snel B."/>
            <person name="Suyama M."/>
            <person name="Yuan Y.P."/>
            <person name="Herrmann R."/>
            <person name="Bork P."/>
        </authorList>
    </citation>
    <scope>SEQUENCE REVISION</scope>
    <source>
        <strain>ATCC 29342 / M129 / Subtype 1</strain>
    </source>
</reference>
<dbReference type="EC" id="3.1.26.4" evidence="1"/>
<dbReference type="EMBL" id="U00089">
    <property type="protein sequence ID" value="AAG34735.1"/>
    <property type="molecule type" value="Genomic_DNA"/>
</dbReference>
<dbReference type="PIR" id="S73362">
    <property type="entry name" value="S73362"/>
</dbReference>
<dbReference type="RefSeq" id="NP_109806.1">
    <property type="nucleotide sequence ID" value="NC_000912.1"/>
</dbReference>
<dbReference type="RefSeq" id="WP_010874475.1">
    <property type="nucleotide sequence ID" value="NZ_OU342337.1"/>
</dbReference>
<dbReference type="SMR" id="P75446"/>
<dbReference type="IntAct" id="P75446">
    <property type="interactions" value="8"/>
</dbReference>
<dbReference type="STRING" id="272634.MPN_118"/>
<dbReference type="EnsemblBacteria" id="AAG34735">
    <property type="protein sequence ID" value="AAG34735"/>
    <property type="gene ID" value="MPN_118"/>
</dbReference>
<dbReference type="KEGG" id="mpn:MPN_118"/>
<dbReference type="PATRIC" id="fig|272634.6.peg.125"/>
<dbReference type="HOGENOM" id="CLU_059546_3_1_14"/>
<dbReference type="OrthoDB" id="9777935at2"/>
<dbReference type="BioCyc" id="MPNE272634:G1GJ3-197-MONOMER"/>
<dbReference type="Proteomes" id="UP000000808">
    <property type="component" value="Chromosome"/>
</dbReference>
<dbReference type="GO" id="GO:0005737">
    <property type="term" value="C:cytoplasm"/>
    <property type="evidence" value="ECO:0007669"/>
    <property type="project" value="UniProtKB-SubCell"/>
</dbReference>
<dbReference type="GO" id="GO:0032299">
    <property type="term" value="C:ribonuclease H2 complex"/>
    <property type="evidence" value="ECO:0007669"/>
    <property type="project" value="TreeGrafter"/>
</dbReference>
<dbReference type="GO" id="GO:0046872">
    <property type="term" value="F:metal ion binding"/>
    <property type="evidence" value="ECO:0007669"/>
    <property type="project" value="UniProtKB-KW"/>
</dbReference>
<dbReference type="GO" id="GO:0003723">
    <property type="term" value="F:RNA binding"/>
    <property type="evidence" value="ECO:0007669"/>
    <property type="project" value="InterPro"/>
</dbReference>
<dbReference type="GO" id="GO:0004523">
    <property type="term" value="F:RNA-DNA hybrid ribonuclease activity"/>
    <property type="evidence" value="ECO:0007669"/>
    <property type="project" value="UniProtKB-EC"/>
</dbReference>
<dbReference type="GO" id="GO:0043137">
    <property type="term" value="P:DNA replication, removal of RNA primer"/>
    <property type="evidence" value="ECO:0007669"/>
    <property type="project" value="TreeGrafter"/>
</dbReference>
<dbReference type="GO" id="GO:0006298">
    <property type="term" value="P:mismatch repair"/>
    <property type="evidence" value="ECO:0007669"/>
    <property type="project" value="TreeGrafter"/>
</dbReference>
<dbReference type="CDD" id="cd06590">
    <property type="entry name" value="RNase_HII_bacteria_HIII_like"/>
    <property type="match status" value="1"/>
</dbReference>
<dbReference type="Gene3D" id="3.30.420.10">
    <property type="entry name" value="Ribonuclease H-like superfamily/Ribonuclease H"/>
    <property type="match status" value="1"/>
</dbReference>
<dbReference type="InterPro" id="IPR001352">
    <property type="entry name" value="RNase_HII/HIII"/>
</dbReference>
<dbReference type="InterPro" id="IPR024567">
    <property type="entry name" value="RNase_HII/HIII_dom"/>
</dbReference>
<dbReference type="InterPro" id="IPR012337">
    <property type="entry name" value="RNaseH-like_sf"/>
</dbReference>
<dbReference type="InterPro" id="IPR036397">
    <property type="entry name" value="RNaseH_sf"/>
</dbReference>
<dbReference type="PANTHER" id="PTHR10954:SF23">
    <property type="entry name" value="RIBONUCLEASE"/>
    <property type="match status" value="1"/>
</dbReference>
<dbReference type="PANTHER" id="PTHR10954">
    <property type="entry name" value="RIBONUCLEASE H2 SUBUNIT A"/>
    <property type="match status" value="1"/>
</dbReference>
<dbReference type="Pfam" id="PF01351">
    <property type="entry name" value="RNase_HII"/>
    <property type="match status" value="1"/>
</dbReference>
<dbReference type="SUPFAM" id="SSF53098">
    <property type="entry name" value="Ribonuclease H-like"/>
    <property type="match status" value="1"/>
</dbReference>
<dbReference type="PROSITE" id="PS51975">
    <property type="entry name" value="RNASE_H_2"/>
    <property type="match status" value="1"/>
</dbReference>